<keyword id="KW-1003">Cell membrane</keyword>
<keyword id="KW-0186">Copper</keyword>
<keyword id="KW-0249">Electron transport</keyword>
<keyword id="KW-0349">Heme</keyword>
<keyword id="KW-0408">Iron</keyword>
<keyword id="KW-0472">Membrane</keyword>
<keyword id="KW-0479">Metal-binding</keyword>
<keyword id="KW-1185">Reference proteome</keyword>
<keyword id="KW-0679">Respiratory chain</keyword>
<keyword id="KW-1278">Translocase</keyword>
<keyword id="KW-0812">Transmembrane</keyword>
<keyword id="KW-1133">Transmembrane helix</keyword>
<keyword id="KW-0813">Transport</keyword>
<protein>
    <recommendedName>
        <fullName>Cytochrome c oxidase subunit 1</fullName>
        <ecNumber>7.1.1.9</ecNumber>
    </recommendedName>
    <alternativeName>
        <fullName>Cytochrome aa3 subunit 1</fullName>
    </alternativeName>
    <alternativeName>
        <fullName>Cytochrome c oxidase polypeptide I</fullName>
    </alternativeName>
</protein>
<name>COX1_COREF</name>
<feature type="chain" id="PRO_0000183439" description="Cytochrome c oxidase subunit 1">
    <location>
        <begin position="1"/>
        <end position="580"/>
    </location>
</feature>
<feature type="transmembrane region" description="Helical" evidence="2">
    <location>
        <begin position="43"/>
        <end position="63"/>
    </location>
</feature>
<feature type="transmembrane region" description="Helical" evidence="2">
    <location>
        <begin position="90"/>
        <end position="110"/>
    </location>
</feature>
<feature type="transmembrane region" description="Helical" evidence="2">
    <location>
        <begin position="122"/>
        <end position="142"/>
    </location>
</feature>
<feature type="transmembrane region" description="Helical" evidence="2">
    <location>
        <begin position="171"/>
        <end position="191"/>
    </location>
</feature>
<feature type="transmembrane region" description="Helical" evidence="2">
    <location>
        <begin position="214"/>
        <end position="234"/>
    </location>
</feature>
<feature type="transmembrane region" description="Helical" evidence="2">
    <location>
        <begin position="259"/>
        <end position="279"/>
    </location>
</feature>
<feature type="transmembrane region" description="Helical" evidence="2">
    <location>
        <begin position="292"/>
        <end position="312"/>
    </location>
</feature>
<feature type="transmembrane region" description="Helical" evidence="2">
    <location>
        <begin position="316"/>
        <end position="336"/>
    </location>
</feature>
<feature type="transmembrane region" description="Helical" evidence="2">
    <location>
        <begin position="360"/>
        <end position="380"/>
    </location>
</feature>
<feature type="transmembrane region" description="Helical" evidence="2">
    <location>
        <begin position="399"/>
        <end position="419"/>
    </location>
</feature>
<feature type="transmembrane region" description="Helical" evidence="2">
    <location>
        <begin position="434"/>
        <end position="454"/>
    </location>
</feature>
<feature type="transmembrane region" description="Helical" evidence="2">
    <location>
        <begin position="477"/>
        <end position="497"/>
    </location>
</feature>
<feature type="region of interest" description="Disordered" evidence="3">
    <location>
        <begin position="1"/>
        <end position="25"/>
    </location>
</feature>
<feature type="binding site" description="axial binding residue" evidence="4">
    <location>
        <position position="87"/>
    </location>
    <ligand>
        <name>Fe(II)-heme a</name>
        <dbReference type="ChEBI" id="CHEBI:61715"/>
    </ligand>
    <ligandPart>
        <name>Fe</name>
        <dbReference type="ChEBI" id="CHEBI:18248"/>
    </ligandPart>
</feature>
<feature type="binding site" evidence="4">
    <location>
        <position position="265"/>
    </location>
    <ligand>
        <name>Cu cation</name>
        <dbReference type="ChEBI" id="CHEBI:23378"/>
        <label>B</label>
    </ligand>
</feature>
<feature type="binding site" evidence="4">
    <location>
        <position position="269"/>
    </location>
    <ligand>
        <name>Cu cation</name>
        <dbReference type="ChEBI" id="CHEBI:23378"/>
        <label>B</label>
    </ligand>
</feature>
<feature type="binding site" evidence="4">
    <location>
        <position position="314"/>
    </location>
    <ligand>
        <name>Cu cation</name>
        <dbReference type="ChEBI" id="CHEBI:23378"/>
        <label>B</label>
    </ligand>
</feature>
<feature type="binding site" evidence="4">
    <location>
        <position position="315"/>
    </location>
    <ligand>
        <name>Cu cation</name>
        <dbReference type="ChEBI" id="CHEBI:23378"/>
        <label>B</label>
    </ligand>
</feature>
<feature type="binding site" description="axial binding residue" evidence="4">
    <location>
        <position position="398"/>
    </location>
    <ligand>
        <name>heme a3</name>
        <dbReference type="ChEBI" id="CHEBI:83282"/>
    </ligand>
    <ligandPart>
        <name>Fe</name>
        <dbReference type="ChEBI" id="CHEBI:18248"/>
    </ligandPart>
</feature>
<feature type="binding site" description="axial binding residue" evidence="4">
    <location>
        <position position="400"/>
    </location>
    <ligand>
        <name>Fe(II)-heme a</name>
        <dbReference type="ChEBI" id="CHEBI:61715"/>
    </ligand>
    <ligandPart>
        <name>Fe</name>
        <dbReference type="ChEBI" id="CHEBI:18248"/>
    </ligandPart>
</feature>
<feature type="cross-link" description="1'-histidyl-3'-tyrosine (His-Tyr)" evidence="1">
    <location>
        <begin position="265"/>
        <end position="269"/>
    </location>
</feature>
<dbReference type="EC" id="7.1.1.9"/>
<dbReference type="EMBL" id="BA000035">
    <property type="protein sequence ID" value="BAC19228.1"/>
    <property type="molecule type" value="Genomic_DNA"/>
</dbReference>
<dbReference type="RefSeq" id="WP_006768424.1">
    <property type="nucleotide sequence ID" value="NC_004369.1"/>
</dbReference>
<dbReference type="SMR" id="Q8FMT1"/>
<dbReference type="STRING" id="196164.gene:10742856"/>
<dbReference type="KEGG" id="cef:CE2418"/>
<dbReference type="eggNOG" id="COG0843">
    <property type="taxonomic scope" value="Bacteria"/>
</dbReference>
<dbReference type="HOGENOM" id="CLU_011899_7_3_11"/>
<dbReference type="OrthoDB" id="9803294at2"/>
<dbReference type="UniPathway" id="UPA00705"/>
<dbReference type="Proteomes" id="UP000001409">
    <property type="component" value="Chromosome"/>
</dbReference>
<dbReference type="GO" id="GO:0005886">
    <property type="term" value="C:plasma membrane"/>
    <property type="evidence" value="ECO:0007669"/>
    <property type="project" value="UniProtKB-SubCell"/>
</dbReference>
<dbReference type="GO" id="GO:0004129">
    <property type="term" value="F:cytochrome-c oxidase activity"/>
    <property type="evidence" value="ECO:0007669"/>
    <property type="project" value="UniProtKB-EC"/>
</dbReference>
<dbReference type="GO" id="GO:0020037">
    <property type="term" value="F:heme binding"/>
    <property type="evidence" value="ECO:0007669"/>
    <property type="project" value="InterPro"/>
</dbReference>
<dbReference type="GO" id="GO:0046872">
    <property type="term" value="F:metal ion binding"/>
    <property type="evidence" value="ECO:0007669"/>
    <property type="project" value="UniProtKB-KW"/>
</dbReference>
<dbReference type="GO" id="GO:0015990">
    <property type="term" value="P:electron transport coupled proton transport"/>
    <property type="evidence" value="ECO:0007669"/>
    <property type="project" value="InterPro"/>
</dbReference>
<dbReference type="GO" id="GO:0006119">
    <property type="term" value="P:oxidative phosphorylation"/>
    <property type="evidence" value="ECO:0007669"/>
    <property type="project" value="UniProtKB-UniPathway"/>
</dbReference>
<dbReference type="GO" id="GO:0022904">
    <property type="term" value="P:respiratory electron transport chain"/>
    <property type="evidence" value="ECO:0007669"/>
    <property type="project" value="TreeGrafter"/>
</dbReference>
<dbReference type="CDD" id="cd01662">
    <property type="entry name" value="Ubiquinol_Oxidase_I"/>
    <property type="match status" value="1"/>
</dbReference>
<dbReference type="FunFam" id="1.20.210.10:FF:000003">
    <property type="entry name" value="Cytochrome c oxidase subunit 1"/>
    <property type="match status" value="1"/>
</dbReference>
<dbReference type="Gene3D" id="1.20.210.10">
    <property type="entry name" value="Cytochrome c oxidase-like, subunit I domain"/>
    <property type="match status" value="1"/>
</dbReference>
<dbReference type="InterPro" id="IPR023616">
    <property type="entry name" value="Cyt_c_oxase-like_su1_dom"/>
</dbReference>
<dbReference type="InterPro" id="IPR036927">
    <property type="entry name" value="Cyt_c_oxase-like_su1_sf"/>
</dbReference>
<dbReference type="InterPro" id="IPR000883">
    <property type="entry name" value="Cyt_C_Oxase_1"/>
</dbReference>
<dbReference type="InterPro" id="IPR023615">
    <property type="entry name" value="Cyt_c_Oxase_su1_BS"/>
</dbReference>
<dbReference type="InterPro" id="IPR014241">
    <property type="entry name" value="Cyt_c_oxidase_su1_bac"/>
</dbReference>
<dbReference type="NCBIfam" id="TIGR02891">
    <property type="entry name" value="CtaD_CoxA"/>
    <property type="match status" value="1"/>
</dbReference>
<dbReference type="PANTHER" id="PTHR10422">
    <property type="entry name" value="CYTOCHROME C OXIDASE SUBUNIT 1"/>
    <property type="match status" value="1"/>
</dbReference>
<dbReference type="PANTHER" id="PTHR10422:SF18">
    <property type="entry name" value="CYTOCHROME C OXIDASE SUBUNIT 1"/>
    <property type="match status" value="1"/>
</dbReference>
<dbReference type="Pfam" id="PF00115">
    <property type="entry name" value="COX1"/>
    <property type="match status" value="1"/>
</dbReference>
<dbReference type="PRINTS" id="PR01165">
    <property type="entry name" value="CYCOXIDASEI"/>
</dbReference>
<dbReference type="SUPFAM" id="SSF81442">
    <property type="entry name" value="Cytochrome c oxidase subunit I-like"/>
    <property type="match status" value="1"/>
</dbReference>
<dbReference type="PROSITE" id="PS50855">
    <property type="entry name" value="COX1"/>
    <property type="match status" value="1"/>
</dbReference>
<dbReference type="PROSITE" id="PS00077">
    <property type="entry name" value="COX1_CUB"/>
    <property type="match status" value="1"/>
</dbReference>
<gene>
    <name type="primary">ctaD</name>
    <name type="ordered locus">CE2418</name>
</gene>
<organism>
    <name type="scientific">Corynebacterium efficiens (strain DSM 44549 / YS-314 / AJ 12310 / JCM 11189 / NBRC 100395)</name>
    <dbReference type="NCBI Taxonomy" id="196164"/>
    <lineage>
        <taxon>Bacteria</taxon>
        <taxon>Bacillati</taxon>
        <taxon>Actinomycetota</taxon>
        <taxon>Actinomycetes</taxon>
        <taxon>Mycobacteriales</taxon>
        <taxon>Corynebacteriaceae</taxon>
        <taxon>Corynebacterium</taxon>
    </lineage>
</organism>
<comment type="function">
    <text evidence="1">Cytochrome c oxidase is the component of the respiratory chain that catalyzes the reduction of oxygen to water. Subunits 1-3 form the functional core of the enzyme complex. CO I is the catalytic subunit of the enzyme. Electrons originating in cytochrome c are transferred via the copper A center of subunit 2 and heme A of subunit 1 to the bimetallic center formed by heme A3 and copper B (By similarity).</text>
</comment>
<comment type="catalytic activity">
    <reaction>
        <text>4 Fe(II)-[cytochrome c] + O2 + 8 H(+)(in) = 4 Fe(III)-[cytochrome c] + 2 H2O + 4 H(+)(out)</text>
        <dbReference type="Rhea" id="RHEA:11436"/>
        <dbReference type="Rhea" id="RHEA-COMP:10350"/>
        <dbReference type="Rhea" id="RHEA-COMP:14399"/>
        <dbReference type="ChEBI" id="CHEBI:15377"/>
        <dbReference type="ChEBI" id="CHEBI:15378"/>
        <dbReference type="ChEBI" id="CHEBI:15379"/>
        <dbReference type="ChEBI" id="CHEBI:29033"/>
        <dbReference type="ChEBI" id="CHEBI:29034"/>
        <dbReference type="EC" id="7.1.1.9"/>
    </reaction>
</comment>
<comment type="cofactor">
    <cofactor evidence="1">
        <name>Cu(2+)</name>
        <dbReference type="ChEBI" id="CHEBI:29036"/>
    </cofactor>
    <text evidence="1">Binds 1 copper B ion per subunit.</text>
</comment>
<comment type="cofactor">
    <cofactor evidence="1">
        <name>heme</name>
        <dbReference type="ChEBI" id="CHEBI:30413"/>
    </cofactor>
    <text evidence="1">Binds 2 heme groups per subunit.</text>
</comment>
<comment type="pathway">
    <text>Energy metabolism; oxidative phosphorylation.</text>
</comment>
<comment type="subunit">
    <text evidence="1">Associates with subunits II, III and IV to form cytochrome c oxidase.</text>
</comment>
<comment type="subcellular location">
    <subcellularLocation>
        <location evidence="1">Cell membrane</location>
        <topology evidence="1">Multi-pass membrane protein</topology>
    </subcellularLocation>
</comment>
<comment type="similarity">
    <text evidence="4">Belongs to the heme-copper respiratory oxidase family.</text>
</comment>
<evidence type="ECO:0000250" key="1"/>
<evidence type="ECO:0000255" key="2"/>
<evidence type="ECO:0000256" key="3">
    <source>
        <dbReference type="SAM" id="MobiDB-lite"/>
    </source>
</evidence>
<evidence type="ECO:0000305" key="4"/>
<sequence>MTAVAPRVDGHVAPQRPEPTGHARKGSKAWLMMTTTDHKQLGIMYIIMSFSFFFLGGLMALLIRAELFTPGLQFLSNEQFNQLFTMHGTVMLLLYGTPIVWGFANYVLPLQIGAPDVAFPRLNAFGFWITTVGGVAMLAGFLTPGGAADFGWTMYSPLSDSIHSPGIGSDMWIIGVGATGIGSVASAINMLTTILCLRAPGMTMFRMPVFTWNIFVTSVLALLIFPLLLAAALGVLYDRKLGGHIYDPANGGSILWQHLFWFFGHPEVYVLALPFFGIISEIIPVFSRKPMFGYIGLVFATLSIGALSMAVWAHHMFVTGAVLLPFFSFMTFLISVPTGVKFFNWVGTMWKGHITWETPMIWAVGFMSTFLFGGLTGIMLASPPLDFHLSDSYFLIAHFHYTLFGTVVFASCAGVYFWFPKMTGRMMDERLGKIHFWLTFVGFHGTFMVQHWLGNMGMPRRYADYLDSDGFTTLNQISTIFSFLLGLSVIPFVWNVFKSWRYGELVTVDDPWGYGNSLEWATSCPPPRHNFTSLPRIRSERPAFELHYPHMIERMRREAHVGEHDLRAETTQSPTPAEVR</sequence>
<accession>Q8FMT1</accession>
<reference key="1">
    <citation type="journal article" date="2003" name="Genome Res.">
        <title>Comparative complete genome sequence analysis of the amino acid replacements responsible for the thermostability of Corynebacterium efficiens.</title>
        <authorList>
            <person name="Nishio Y."/>
            <person name="Nakamura Y."/>
            <person name="Kawarabayasi Y."/>
            <person name="Usuda Y."/>
            <person name="Kimura E."/>
            <person name="Sugimoto S."/>
            <person name="Matsui K."/>
            <person name="Yamagishi A."/>
            <person name="Kikuchi H."/>
            <person name="Ikeo K."/>
            <person name="Gojobori T."/>
        </authorList>
    </citation>
    <scope>NUCLEOTIDE SEQUENCE [LARGE SCALE GENOMIC DNA]</scope>
    <source>
        <strain>DSM 44549 / YS-314 / AJ 12310 / JCM 11189 / NBRC 100395</strain>
    </source>
</reference>
<proteinExistence type="inferred from homology"/>